<evidence type="ECO:0000250" key="1"/>
<evidence type="ECO:0000250" key="2">
    <source>
        <dbReference type="UniProtKB" id="P35256"/>
    </source>
</evidence>
<evidence type="ECO:0000305" key="3"/>
<gene>
    <name type="primary">VP24</name>
</gene>
<reference key="1">
    <citation type="journal article" date="1995" name="Biochem. Mol. Biol. Int.">
        <title>Complete nucleotide sequences of Marburg virus genes 5 and 6 encoding VP30 and VP24 proteins.</title>
        <authorList>
            <person name="Bukreyev A.A."/>
            <person name="Belanov E.F."/>
            <person name="Blinov V.M."/>
            <person name="Netesov S.V."/>
        </authorList>
    </citation>
    <scope>NUCLEOTIDE SEQUENCE [GENOMIC RNA]</scope>
</reference>
<reference key="2">
    <citation type="journal article" date="1995" name="Arch. Virol.">
        <title>The complete nucleotide sequence of the Popp (1967) strain of Marburg virus: a comparison with the Musoke (1980) strain.</title>
        <authorList>
            <person name="Bukreyev A.A."/>
            <person name="Volchkov V.E."/>
            <person name="Blinov V.M."/>
            <person name="Dryga S.A."/>
            <person name="Netesov S.V."/>
        </authorList>
    </citation>
    <scope>NUCLEOTIDE SEQUENCE [GENOMIC RNA]</scope>
</reference>
<organism>
    <name type="scientific">Lake Victoria marburgvirus (strain Popp-67)</name>
    <name type="common">MARV</name>
    <name type="synonym">Marburg virus (strain West Germany/Popp/1967)</name>
    <dbReference type="NCBI Taxonomy" id="33728"/>
    <lineage>
        <taxon>Viruses</taxon>
        <taxon>Riboviria</taxon>
        <taxon>Orthornavirae</taxon>
        <taxon>Negarnaviricota</taxon>
        <taxon>Haploviricotina</taxon>
        <taxon>Monjiviricetes</taxon>
        <taxon>Mononegavirales</taxon>
        <taxon>Filoviridae</taxon>
        <taxon>Orthomarburgvirus</taxon>
        <taxon>Orthomarburgvirus marburgense</taxon>
    </lineage>
</organism>
<feature type="chain" id="PRO_0000222157" description="Membrane-associated protein VP24">
    <location>
        <begin position="1"/>
        <end position="253"/>
    </location>
</feature>
<sequence>MAELSTRYNLPANVTEKSINLDLNSTARWIKEPSVGGWTVKWGNFVFHIPNTGMALLHHLKSNFVVPEWQQTRNLFSHLFKNPKSTIIEPFLALRILLGVALKDQELQQSLIPGFRSIVHMLSEWLLLEVTSAIHISPNLLGIYLTSDMFKILMAGVKNFFNKMFTLHVVNDHGKPSSIEIKLTGQQIIITRVNMGFLVEVRRIDIEPCCGETVLSESVVFGLVAEAVLREHSQMEKGQPLDLTQYMNSKIAI</sequence>
<organismHost>
    <name type="scientific">Chlorocebus aethiops</name>
    <name type="common">Green monkey</name>
    <name type="synonym">Cercopithecus aethiops</name>
    <dbReference type="NCBI Taxonomy" id="9534"/>
</organismHost>
<organismHost>
    <name type="scientific">Homo sapiens</name>
    <name type="common">Human</name>
    <dbReference type="NCBI Taxonomy" id="9606"/>
</organismHost>
<organismHost>
    <name type="scientific">Rousettus aegyptiacus</name>
    <name type="common">Egyptian fruit bat</name>
    <name type="synonym">Pteropus aegyptiacus</name>
    <dbReference type="NCBI Taxonomy" id="9407"/>
</organismHost>
<protein>
    <recommendedName>
        <fullName>Membrane-associated protein VP24</fullName>
    </recommendedName>
    <alternativeName>
        <fullName>Marburg VP24</fullName>
        <shortName>mVP24</shortName>
    </alternativeName>
</protein>
<proteinExistence type="inferred from homology"/>
<accession>P41325</accession>
<comment type="function">
    <text evidence="2">May act as a minor matrix protein that plays a role in assembly of viral nucleocapsid and virion budding. Unlike Ebola VP24, mVP24 has no measurable impact of host dendritic cell function.</text>
</comment>
<comment type="subunit">
    <text evidence="1 3">Monomer or homotetramer (Potential). Interacts with nucleoprotein (By similarity).</text>
</comment>
<comment type="subcellular location">
    <subcellularLocation>
        <location evidence="1">Virion membrane</location>
        <topology evidence="1">Peripheral membrane protein</topology>
    </subcellularLocation>
    <subcellularLocation>
        <location evidence="1">Host cell membrane</location>
        <topology evidence="1">Peripheral membrane protein</topology>
        <orientation evidence="1">Cytoplasmic side</orientation>
    </subcellularLocation>
    <subcellularLocation>
        <location evidence="1">Host endomembrane system</location>
        <topology evidence="1">Peripheral membrane protein</topology>
    </subcellularLocation>
    <text evidence="1">In virion, localizes on the intravirional side of the membrane. In the host cell, it is found associated with virus-induced membrane proliferation foci and to the plasma membrane where budding takes place (By similarity).</text>
</comment>
<comment type="similarity">
    <text evidence="3">Belongs to the filoviridae membrane-associated protein VP24 family.</text>
</comment>
<keyword id="KW-1032">Host cell membrane</keyword>
<keyword id="KW-1043">Host membrane</keyword>
<keyword id="KW-0472">Membrane</keyword>
<keyword id="KW-0468">Viral matrix protein</keyword>
<keyword id="KW-0946">Virion</keyword>
<dbReference type="EMBL" id="X64405">
    <property type="protein sequence ID" value="CAA45747.1"/>
    <property type="molecule type" value="Genomic_RNA"/>
</dbReference>
<dbReference type="EMBL" id="Z29337">
    <property type="protein sequence ID" value="CAA82541.1"/>
    <property type="molecule type" value="Genomic_RNA"/>
</dbReference>
<dbReference type="PIR" id="S44053">
    <property type="entry name" value="S44053"/>
</dbReference>
<dbReference type="SMR" id="P41325"/>
<dbReference type="Proteomes" id="UP000007772">
    <property type="component" value="Genome"/>
</dbReference>
<dbReference type="GO" id="GO:0033645">
    <property type="term" value="C:host cell endomembrane system"/>
    <property type="evidence" value="ECO:0007669"/>
    <property type="project" value="UniProtKB-SubCell"/>
</dbReference>
<dbReference type="GO" id="GO:0020002">
    <property type="term" value="C:host cell plasma membrane"/>
    <property type="evidence" value="ECO:0007669"/>
    <property type="project" value="UniProtKB-SubCell"/>
</dbReference>
<dbReference type="GO" id="GO:0016020">
    <property type="term" value="C:membrane"/>
    <property type="evidence" value="ECO:0007669"/>
    <property type="project" value="UniProtKB-KW"/>
</dbReference>
<dbReference type="GO" id="GO:0055036">
    <property type="term" value="C:virion membrane"/>
    <property type="evidence" value="ECO:0007669"/>
    <property type="project" value="UniProtKB-SubCell"/>
</dbReference>
<dbReference type="GO" id="GO:0039660">
    <property type="term" value="F:structural constituent of virion"/>
    <property type="evidence" value="ECO:0007669"/>
    <property type="project" value="UniProtKB-KW"/>
</dbReference>
<dbReference type="GO" id="GO:0016032">
    <property type="term" value="P:viral process"/>
    <property type="evidence" value="ECO:0007669"/>
    <property type="project" value="InterPro"/>
</dbReference>
<dbReference type="InterPro" id="IPR009433">
    <property type="entry name" value="Filo_VP24"/>
</dbReference>
<dbReference type="Pfam" id="PF06389">
    <property type="entry name" value="Filo_VP24"/>
    <property type="match status" value="1"/>
</dbReference>
<dbReference type="PIRSF" id="PIRSF011355">
    <property type="entry name" value="VP24"/>
    <property type="match status" value="1"/>
</dbReference>
<name>VP24_MABVP</name>